<comment type="function">
    <text>Gastrin stimulates the stomach mucosa to produce and secrete hydrochloric acid and the pancreas to secrete its digestive enzymes. It also stimulates smooth muscle contraction and increases blood circulation and water secretion in the stomach and intestine.</text>
</comment>
<comment type="subcellular location">
    <subcellularLocation>
        <location>Secreted</location>
    </subcellularLocation>
</comment>
<comment type="PTM">
    <text evidence="1">Sulfation enhances proteolytic processing, and blocks peptide degradation. Levels of sulfation differ between proteolytically-cleaved gastrins and between tissues (By similarity).</text>
</comment>
<comment type="similarity">
    <text evidence="3">Belongs to the gastrin/cholecystokinin family.</text>
</comment>
<organism>
    <name type="scientific">Macropus giganteus</name>
    <name type="common">Eastern gray kangaroo</name>
    <dbReference type="NCBI Taxonomy" id="9317"/>
    <lineage>
        <taxon>Eukaryota</taxon>
        <taxon>Metazoa</taxon>
        <taxon>Chordata</taxon>
        <taxon>Craniata</taxon>
        <taxon>Vertebrata</taxon>
        <taxon>Euteleostomi</taxon>
        <taxon>Mammalia</taxon>
        <taxon>Metatheria</taxon>
        <taxon>Diprotodontia</taxon>
        <taxon>Macropodidae</taxon>
        <taxon>Macropus</taxon>
    </lineage>
</organism>
<protein>
    <recommendedName>
        <fullName>Gastrin</fullName>
    </recommendedName>
    <component>
        <recommendedName>
            <fullName>Big gastrin</fullName>
        </recommendedName>
        <alternativeName>
            <fullName>Gastrin-33</fullName>
        </alternativeName>
    </component>
    <component>
        <recommendedName>
            <fullName>Gastrin-16</fullName>
        </recommendedName>
    </component>
    <component>
        <recommendedName>
            <fullName>Gastrin-15</fullName>
        </recommendedName>
    </component>
</protein>
<feature type="peptide" id="PRO_0000260276" description="Big gastrin">
    <location>
        <begin position="1"/>
        <end position="33"/>
    </location>
</feature>
<feature type="peptide" id="PRO_0000260277" description="Gastrin-16">
    <location>
        <begin position="18"/>
        <end position="33"/>
    </location>
</feature>
<feature type="peptide" id="PRO_0000260278" description="Gastrin-15">
    <location>
        <begin position="19"/>
        <end position="33"/>
    </location>
</feature>
<feature type="modified residue" description="Pyrrolidone carboxylic acid" evidence="2">
    <location>
        <position position="1"/>
    </location>
</feature>
<feature type="modified residue" description="Sulfotyrosine" evidence="1">
    <location>
        <position position="28"/>
    </location>
</feature>
<feature type="modified residue" description="Phenylalanine amide" evidence="1">
    <location>
        <position position="33"/>
    </location>
</feature>
<name>GAST_MACGI</name>
<proteinExistence type="evidence at protein level"/>
<sequence length="33" mass="3913">QLHPQDLPHLMTDLSKKKGPWQEEDAAYGWMDF</sequence>
<dbReference type="GO" id="GO:0005576">
    <property type="term" value="C:extracellular region"/>
    <property type="evidence" value="ECO:0007669"/>
    <property type="project" value="UniProtKB-SubCell"/>
</dbReference>
<dbReference type="GO" id="GO:0005179">
    <property type="term" value="F:hormone activity"/>
    <property type="evidence" value="ECO:0007669"/>
    <property type="project" value="UniProtKB-KW"/>
</dbReference>
<dbReference type="InterPro" id="IPR013152">
    <property type="entry name" value="Gastrin/cholecystokinin_CS"/>
</dbReference>
<dbReference type="PROSITE" id="PS00259">
    <property type="entry name" value="GASTRIN"/>
    <property type="match status" value="1"/>
</dbReference>
<evidence type="ECO:0000250" key="1"/>
<evidence type="ECO:0000250" key="2">
    <source>
        <dbReference type="UniProtKB" id="P01350"/>
    </source>
</evidence>
<evidence type="ECO:0000305" key="3"/>
<reference key="1">
    <citation type="journal article" date="1993" name="Peptides">
        <title>Gastrin and cholecystokinin in the Eastern Grey kangaroo, Macropus giganteus giganteus.</title>
        <authorList>
            <person name="Johnsen A.H."/>
            <person name="Shulkes A."/>
        </authorList>
    </citation>
    <scope>PROTEIN SEQUENCE</scope>
    <scope>SULFATION AT TYR-28</scope>
    <scope>AMIDATION AT PHE-33</scope>
</reference>
<accession>P0C228</accession>
<keyword id="KW-0027">Amidation</keyword>
<keyword id="KW-0165">Cleavage on pair of basic residues</keyword>
<keyword id="KW-0903">Direct protein sequencing</keyword>
<keyword id="KW-0372">Hormone</keyword>
<keyword id="KW-0873">Pyrrolidone carboxylic acid</keyword>
<keyword id="KW-0964">Secreted</keyword>
<keyword id="KW-0765">Sulfation</keyword>
<gene>
    <name type="primary">GAST</name>
</gene>